<dbReference type="EMBL" id="CU329671">
    <property type="protein sequence ID" value="CAB88241.1"/>
    <property type="molecule type" value="Genomic_DNA"/>
</dbReference>
<dbReference type="SMR" id="Q9P779"/>
<dbReference type="BioGRID" id="276374">
    <property type="interactions" value="1"/>
</dbReference>
<dbReference type="FunCoup" id="Q9P779">
    <property type="interactions" value="3"/>
</dbReference>
<dbReference type="STRING" id="284812.Q9P779"/>
<dbReference type="PaxDb" id="4896-SPBC1711.11.1"/>
<dbReference type="EnsemblFungi" id="SPBC1711.11.1">
    <property type="protein sequence ID" value="SPBC1711.11.1:pep"/>
    <property type="gene ID" value="SPBC1711.11"/>
</dbReference>
<dbReference type="KEGG" id="spo:2539824"/>
<dbReference type="PomBase" id="SPBC1711.11"/>
<dbReference type="VEuPathDB" id="FungiDB:SPBC1711.11"/>
<dbReference type="eggNOG" id="KOG2273">
    <property type="taxonomic scope" value="Eukaryota"/>
</dbReference>
<dbReference type="HOGENOM" id="CLU_725953_0_0_1"/>
<dbReference type="InParanoid" id="Q9P779"/>
<dbReference type="OMA" id="MYQFLEN"/>
<dbReference type="PhylomeDB" id="Q9P779"/>
<dbReference type="PRO" id="PR:Q9P779"/>
<dbReference type="Proteomes" id="UP000002485">
    <property type="component" value="Chromosome II"/>
</dbReference>
<dbReference type="GO" id="GO:0005776">
    <property type="term" value="C:autophagosome"/>
    <property type="evidence" value="ECO:0000266"/>
    <property type="project" value="PomBase"/>
</dbReference>
<dbReference type="GO" id="GO:0032153">
    <property type="term" value="C:cell division site"/>
    <property type="evidence" value="ECO:0007005"/>
    <property type="project" value="PomBase"/>
</dbReference>
<dbReference type="GO" id="GO:0005737">
    <property type="term" value="C:cytoplasm"/>
    <property type="evidence" value="ECO:0000314"/>
    <property type="project" value="PomBase"/>
</dbReference>
<dbReference type="GO" id="GO:0005829">
    <property type="term" value="C:cytosol"/>
    <property type="evidence" value="ECO:0007005"/>
    <property type="project" value="PomBase"/>
</dbReference>
<dbReference type="GO" id="GO:0005769">
    <property type="term" value="C:early endosome"/>
    <property type="evidence" value="ECO:0000318"/>
    <property type="project" value="GO_Central"/>
</dbReference>
<dbReference type="GO" id="GO:0016020">
    <property type="term" value="C:membrane"/>
    <property type="evidence" value="ECO:0007669"/>
    <property type="project" value="UniProtKB-SubCell"/>
</dbReference>
<dbReference type="GO" id="GO:0005634">
    <property type="term" value="C:nucleus"/>
    <property type="evidence" value="ECO:0000314"/>
    <property type="project" value="PomBase"/>
</dbReference>
<dbReference type="GO" id="GO:0000407">
    <property type="term" value="C:phagophore assembly site"/>
    <property type="evidence" value="ECO:0000314"/>
    <property type="project" value="PomBase"/>
</dbReference>
<dbReference type="GO" id="GO:0032266">
    <property type="term" value="F:phosphatidylinositol-3-phosphate binding"/>
    <property type="evidence" value="ECO:0000266"/>
    <property type="project" value="PomBase"/>
</dbReference>
<dbReference type="GO" id="GO:0032456">
    <property type="term" value="P:endocytic recycling"/>
    <property type="evidence" value="ECO:0000318"/>
    <property type="project" value="GO_Central"/>
</dbReference>
<dbReference type="GO" id="GO:0000423">
    <property type="term" value="P:mitophagy"/>
    <property type="evidence" value="ECO:0000315"/>
    <property type="project" value="PomBase"/>
</dbReference>
<dbReference type="GO" id="GO:0034727">
    <property type="term" value="P:piecemeal microautophagy of the nucleus"/>
    <property type="evidence" value="ECO:0000318"/>
    <property type="project" value="GO_Central"/>
</dbReference>
<dbReference type="GO" id="GO:0015031">
    <property type="term" value="P:protein transport"/>
    <property type="evidence" value="ECO:0000318"/>
    <property type="project" value="GO_Central"/>
</dbReference>
<dbReference type="GO" id="GO:0061709">
    <property type="term" value="P:reticulophagy"/>
    <property type="evidence" value="ECO:0000315"/>
    <property type="project" value="PomBase"/>
</dbReference>
<dbReference type="CDD" id="cd06863">
    <property type="entry name" value="PX_Atg24p"/>
    <property type="match status" value="1"/>
</dbReference>
<dbReference type="Gene3D" id="3.30.1520.10">
    <property type="entry name" value="Phox-like domain"/>
    <property type="match status" value="1"/>
</dbReference>
<dbReference type="InterPro" id="IPR001683">
    <property type="entry name" value="PX_dom"/>
</dbReference>
<dbReference type="InterPro" id="IPR036871">
    <property type="entry name" value="PX_dom_sf"/>
</dbReference>
<dbReference type="PANTHER" id="PTHR45949">
    <property type="entry name" value="SORTING NEXIN-4"/>
    <property type="match status" value="1"/>
</dbReference>
<dbReference type="PANTHER" id="PTHR45949:SF2">
    <property type="entry name" value="SORTING NEXIN-4"/>
    <property type="match status" value="1"/>
</dbReference>
<dbReference type="Pfam" id="PF00787">
    <property type="entry name" value="PX"/>
    <property type="match status" value="1"/>
</dbReference>
<dbReference type="SMART" id="SM00312">
    <property type="entry name" value="PX"/>
    <property type="match status" value="1"/>
</dbReference>
<dbReference type="SUPFAM" id="SSF64268">
    <property type="entry name" value="PX domain"/>
    <property type="match status" value="1"/>
</dbReference>
<dbReference type="PROSITE" id="PS50195">
    <property type="entry name" value="PX"/>
    <property type="match status" value="1"/>
</dbReference>
<name>YNYB_SCHPO</name>
<accession>Q9P779</accession>
<comment type="subcellular location">
    <subcellularLocation>
        <location evidence="3">Cytoplasm</location>
    </subcellularLocation>
    <subcellularLocation>
        <location evidence="1">Membrane</location>
        <topology evidence="1">Peripheral membrane protein</topology>
        <orientation evidence="1">Cytoplasmic side</orientation>
    </subcellularLocation>
</comment>
<comment type="domain">
    <text evidence="1">The PX domain binds phosphatidylinositol 3-phosphate which is necessary for peripheral membrane localization to the perivacuolar punctate structures.</text>
</comment>
<comment type="similarity">
    <text evidence="4">Belongs to the sorting nexin family.</text>
</comment>
<evidence type="ECO:0000250" key="1"/>
<evidence type="ECO:0000255" key="2">
    <source>
        <dbReference type="PROSITE-ProRule" id="PRU00147"/>
    </source>
</evidence>
<evidence type="ECO:0000269" key="3">
    <source>
    </source>
</evidence>
<evidence type="ECO:0000305" key="4"/>
<sequence>MLKCTIKNEQIETLRSGDTFVSYEIETESDLPVFEDKKFSVRRRYKDFEMLHNILSHDYNGYAIPPLPRKYTVSSFSGGSLSPIFIARRMQSLQTFLDRCSTHPVISNSMHMYQFLENNSWKSYYHNAWMQSENTKSKGNNVSGGIESSIQNLDPYAQSLYETAKQLLQNADTDLSKLEKTCVQYMNSVQNFPTDIPVPSNLSISNLDVVSVEFKRLKRNSIFLINSFHSKVITSIQDLEDYMVVFKSLIKSREQKVKQFEHFQQIVQSNSNNPDQSSRSDPNFVEATPVVQQTPELKPSPNTTIRTSSLFSIPKFFKKKRYSLGQDDANPMELLQLSFQELCIFNEKLEQELNFLRERIDVEMRKTLQMVCDCHVEYFSGILEQHAVKE</sequence>
<reference key="1">
    <citation type="journal article" date="2002" name="Nature">
        <title>The genome sequence of Schizosaccharomyces pombe.</title>
        <authorList>
            <person name="Wood V."/>
            <person name="Gwilliam R."/>
            <person name="Rajandream M.A."/>
            <person name="Lyne M.H."/>
            <person name="Lyne R."/>
            <person name="Stewart A."/>
            <person name="Sgouros J.G."/>
            <person name="Peat N."/>
            <person name="Hayles J."/>
            <person name="Baker S.G."/>
            <person name="Basham D."/>
            <person name="Bowman S."/>
            <person name="Brooks K."/>
            <person name="Brown D."/>
            <person name="Brown S."/>
            <person name="Chillingworth T."/>
            <person name="Churcher C.M."/>
            <person name="Collins M."/>
            <person name="Connor R."/>
            <person name="Cronin A."/>
            <person name="Davis P."/>
            <person name="Feltwell T."/>
            <person name="Fraser A."/>
            <person name="Gentles S."/>
            <person name="Goble A."/>
            <person name="Hamlin N."/>
            <person name="Harris D.E."/>
            <person name="Hidalgo J."/>
            <person name="Hodgson G."/>
            <person name="Holroyd S."/>
            <person name="Hornsby T."/>
            <person name="Howarth S."/>
            <person name="Huckle E.J."/>
            <person name="Hunt S."/>
            <person name="Jagels K."/>
            <person name="James K.D."/>
            <person name="Jones L."/>
            <person name="Jones M."/>
            <person name="Leather S."/>
            <person name="McDonald S."/>
            <person name="McLean J."/>
            <person name="Mooney P."/>
            <person name="Moule S."/>
            <person name="Mungall K.L."/>
            <person name="Murphy L.D."/>
            <person name="Niblett D."/>
            <person name="Odell C."/>
            <person name="Oliver K."/>
            <person name="O'Neil S."/>
            <person name="Pearson D."/>
            <person name="Quail M.A."/>
            <person name="Rabbinowitsch E."/>
            <person name="Rutherford K.M."/>
            <person name="Rutter S."/>
            <person name="Saunders D."/>
            <person name="Seeger K."/>
            <person name="Sharp S."/>
            <person name="Skelton J."/>
            <person name="Simmonds M.N."/>
            <person name="Squares R."/>
            <person name="Squares S."/>
            <person name="Stevens K."/>
            <person name="Taylor K."/>
            <person name="Taylor R.G."/>
            <person name="Tivey A."/>
            <person name="Walsh S.V."/>
            <person name="Warren T."/>
            <person name="Whitehead S."/>
            <person name="Woodward J.R."/>
            <person name="Volckaert G."/>
            <person name="Aert R."/>
            <person name="Robben J."/>
            <person name="Grymonprez B."/>
            <person name="Weltjens I."/>
            <person name="Vanstreels E."/>
            <person name="Rieger M."/>
            <person name="Schaefer M."/>
            <person name="Mueller-Auer S."/>
            <person name="Gabel C."/>
            <person name="Fuchs M."/>
            <person name="Duesterhoeft A."/>
            <person name="Fritzc C."/>
            <person name="Holzer E."/>
            <person name="Moestl D."/>
            <person name="Hilbert H."/>
            <person name="Borzym K."/>
            <person name="Langer I."/>
            <person name="Beck A."/>
            <person name="Lehrach H."/>
            <person name="Reinhardt R."/>
            <person name="Pohl T.M."/>
            <person name="Eger P."/>
            <person name="Zimmermann W."/>
            <person name="Wedler H."/>
            <person name="Wambutt R."/>
            <person name="Purnelle B."/>
            <person name="Goffeau A."/>
            <person name="Cadieu E."/>
            <person name="Dreano S."/>
            <person name="Gloux S."/>
            <person name="Lelaure V."/>
            <person name="Mottier S."/>
            <person name="Galibert F."/>
            <person name="Aves S.J."/>
            <person name="Xiang Z."/>
            <person name="Hunt C."/>
            <person name="Moore K."/>
            <person name="Hurst S.M."/>
            <person name="Lucas M."/>
            <person name="Rochet M."/>
            <person name="Gaillardin C."/>
            <person name="Tallada V.A."/>
            <person name="Garzon A."/>
            <person name="Thode G."/>
            <person name="Daga R.R."/>
            <person name="Cruzado L."/>
            <person name="Jimenez J."/>
            <person name="Sanchez M."/>
            <person name="del Rey F."/>
            <person name="Benito J."/>
            <person name="Dominguez A."/>
            <person name="Revuelta J.L."/>
            <person name="Moreno S."/>
            <person name="Armstrong J."/>
            <person name="Forsburg S.L."/>
            <person name="Cerutti L."/>
            <person name="Lowe T."/>
            <person name="McCombie W.R."/>
            <person name="Paulsen I."/>
            <person name="Potashkin J."/>
            <person name="Shpakovski G.V."/>
            <person name="Ussery D."/>
            <person name="Barrell B.G."/>
            <person name="Nurse P."/>
        </authorList>
    </citation>
    <scope>NUCLEOTIDE SEQUENCE [LARGE SCALE GENOMIC DNA]</scope>
    <source>
        <strain>972 / ATCC 24843</strain>
    </source>
</reference>
<reference key="2">
    <citation type="journal article" date="2006" name="Nat. Biotechnol.">
        <title>ORFeome cloning and global analysis of protein localization in the fission yeast Schizosaccharomyces pombe.</title>
        <authorList>
            <person name="Matsuyama A."/>
            <person name="Arai R."/>
            <person name="Yashiroda Y."/>
            <person name="Shirai A."/>
            <person name="Kamata A."/>
            <person name="Sekido S."/>
            <person name="Kobayashi Y."/>
            <person name="Hashimoto A."/>
            <person name="Hamamoto M."/>
            <person name="Hiraoka Y."/>
            <person name="Horinouchi S."/>
            <person name="Yoshida M."/>
        </authorList>
    </citation>
    <scope>SUBCELLULAR LOCATION [LARGE SCALE ANALYSIS]</scope>
</reference>
<organism>
    <name type="scientific">Schizosaccharomyces pombe (strain 972 / ATCC 24843)</name>
    <name type="common">Fission yeast</name>
    <dbReference type="NCBI Taxonomy" id="284812"/>
    <lineage>
        <taxon>Eukaryota</taxon>
        <taxon>Fungi</taxon>
        <taxon>Dikarya</taxon>
        <taxon>Ascomycota</taxon>
        <taxon>Taphrinomycotina</taxon>
        <taxon>Schizosaccharomycetes</taxon>
        <taxon>Schizosaccharomycetales</taxon>
        <taxon>Schizosaccharomycetaceae</taxon>
        <taxon>Schizosaccharomyces</taxon>
    </lineage>
</organism>
<feature type="chain" id="PRO_0000315964" description="Sorting nexin C1711.11">
    <location>
        <begin position="1"/>
        <end position="390"/>
    </location>
</feature>
<feature type="domain" description="PX" evidence="2">
    <location>
        <begin position="1"/>
        <end position="123"/>
    </location>
</feature>
<feature type="binding site" evidence="1">
    <location>
        <position position="44"/>
    </location>
    <ligand>
        <name>a 1,2-diacyl-sn-glycero-3-phospho-(1D-myo-inositol-3-phosphate)</name>
        <dbReference type="ChEBI" id="CHEBI:58088"/>
    </ligand>
</feature>
<feature type="binding site" evidence="1">
    <location>
        <position position="70"/>
    </location>
    <ligand>
        <name>a 1,2-diacyl-sn-glycero-3-phospho-(1D-myo-inositol-3-phosphate)</name>
        <dbReference type="ChEBI" id="CHEBI:58088"/>
    </ligand>
</feature>
<feature type="binding site" evidence="1">
    <location>
        <position position="89"/>
    </location>
    <ligand>
        <name>a 1,2-diacyl-sn-glycero-3-phospho-(1D-myo-inositol-3-phosphate)</name>
        <dbReference type="ChEBI" id="CHEBI:58088"/>
    </ligand>
</feature>
<keyword id="KW-0175">Coiled coil</keyword>
<keyword id="KW-0963">Cytoplasm</keyword>
<keyword id="KW-0446">Lipid-binding</keyword>
<keyword id="KW-0472">Membrane</keyword>
<keyword id="KW-0653">Protein transport</keyword>
<keyword id="KW-1185">Reference proteome</keyword>
<keyword id="KW-0813">Transport</keyword>
<protein>
    <recommendedName>
        <fullName>Sorting nexin C1711.11</fullName>
    </recommendedName>
</protein>
<gene>
    <name type="ORF">SPBC1711.11</name>
</gene>
<proteinExistence type="inferred from homology"/>